<sequence>MSEALNELATYLTEVRGALISSSEIKYGELNVTTTAENVIALLTFLRDDAKCGFVNMTDICGVDWPQRPDRFDVVYHLLSPKKNLRIRIKVPVAEDQPVPSACGIYPGADWFERETWDMYGVLFTGHPDLRRILTDYGFEGHPLRKDFPTTGFVEVRYDDAAKRVVYEPVELKQEFRNFDFLSPWEGTDYVLPGDEKAKA</sequence>
<feature type="chain" id="PRO_1000166669" description="NADH-quinone oxidoreductase subunit C">
    <location>
        <begin position="1"/>
        <end position="200"/>
    </location>
</feature>
<accession>B9JD44</accession>
<reference key="1">
    <citation type="journal article" date="2009" name="J. Bacteriol.">
        <title>Genome sequences of three Agrobacterium biovars help elucidate the evolution of multichromosome genomes in bacteria.</title>
        <authorList>
            <person name="Slater S.C."/>
            <person name="Goldman B.S."/>
            <person name="Goodner B."/>
            <person name="Setubal J.C."/>
            <person name="Farrand S.K."/>
            <person name="Nester E.W."/>
            <person name="Burr T.J."/>
            <person name="Banta L."/>
            <person name="Dickerman A.W."/>
            <person name="Paulsen I."/>
            <person name="Otten L."/>
            <person name="Suen G."/>
            <person name="Welch R."/>
            <person name="Almeida N.F."/>
            <person name="Arnold F."/>
            <person name="Burton O.T."/>
            <person name="Du Z."/>
            <person name="Ewing A."/>
            <person name="Godsy E."/>
            <person name="Heisel S."/>
            <person name="Houmiel K.L."/>
            <person name="Jhaveri J."/>
            <person name="Lu J."/>
            <person name="Miller N.M."/>
            <person name="Norton S."/>
            <person name="Chen Q."/>
            <person name="Phoolcharoen W."/>
            <person name="Ohlin V."/>
            <person name="Ondrusek D."/>
            <person name="Pride N."/>
            <person name="Stricklin S.L."/>
            <person name="Sun J."/>
            <person name="Wheeler C."/>
            <person name="Wilson L."/>
            <person name="Zhu H."/>
            <person name="Wood D.W."/>
        </authorList>
    </citation>
    <scope>NUCLEOTIDE SEQUENCE [LARGE SCALE GENOMIC DNA]</scope>
    <source>
        <strain>K84 / ATCC BAA-868</strain>
    </source>
</reference>
<proteinExistence type="inferred from homology"/>
<comment type="function">
    <text evidence="1">NDH-1 shuttles electrons from NADH, via FMN and iron-sulfur (Fe-S) centers, to quinones in the respiratory chain. The immediate electron acceptor for the enzyme in this species is believed to be ubiquinone. Couples the redox reaction to proton translocation (for every two electrons transferred, four hydrogen ions are translocated across the cytoplasmic membrane), and thus conserves the redox energy in a proton gradient.</text>
</comment>
<comment type="catalytic activity">
    <reaction evidence="1">
        <text>a quinone + NADH + 5 H(+)(in) = a quinol + NAD(+) + 4 H(+)(out)</text>
        <dbReference type="Rhea" id="RHEA:57888"/>
        <dbReference type="ChEBI" id="CHEBI:15378"/>
        <dbReference type="ChEBI" id="CHEBI:24646"/>
        <dbReference type="ChEBI" id="CHEBI:57540"/>
        <dbReference type="ChEBI" id="CHEBI:57945"/>
        <dbReference type="ChEBI" id="CHEBI:132124"/>
    </reaction>
</comment>
<comment type="subunit">
    <text evidence="1">NDH-1 is composed of 14 different subunits. Subunits NuoB, C, D, E, F, and G constitute the peripheral sector of the complex.</text>
</comment>
<comment type="subcellular location">
    <subcellularLocation>
        <location evidence="1">Cell inner membrane</location>
        <topology evidence="1">Peripheral membrane protein</topology>
        <orientation evidence="1">Cytoplasmic side</orientation>
    </subcellularLocation>
</comment>
<comment type="similarity">
    <text evidence="1">Belongs to the complex I 30 kDa subunit family.</text>
</comment>
<organism>
    <name type="scientific">Rhizobium rhizogenes (strain K84 / ATCC BAA-868)</name>
    <name type="common">Agrobacterium radiobacter</name>
    <dbReference type="NCBI Taxonomy" id="311403"/>
    <lineage>
        <taxon>Bacteria</taxon>
        <taxon>Pseudomonadati</taxon>
        <taxon>Pseudomonadota</taxon>
        <taxon>Alphaproteobacteria</taxon>
        <taxon>Hyphomicrobiales</taxon>
        <taxon>Rhizobiaceae</taxon>
        <taxon>Rhizobium/Agrobacterium group</taxon>
        <taxon>Rhizobium</taxon>
    </lineage>
</organism>
<keyword id="KW-0997">Cell inner membrane</keyword>
<keyword id="KW-1003">Cell membrane</keyword>
<keyword id="KW-0472">Membrane</keyword>
<keyword id="KW-0520">NAD</keyword>
<keyword id="KW-0874">Quinone</keyword>
<keyword id="KW-1278">Translocase</keyword>
<keyword id="KW-0813">Transport</keyword>
<keyword id="KW-0830">Ubiquinone</keyword>
<protein>
    <recommendedName>
        <fullName evidence="1">NADH-quinone oxidoreductase subunit C</fullName>
        <ecNumber evidence="1">7.1.1.-</ecNumber>
    </recommendedName>
    <alternativeName>
        <fullName evidence="1">NADH dehydrogenase I subunit C</fullName>
    </alternativeName>
    <alternativeName>
        <fullName evidence="1">NDH-1 subunit C</fullName>
    </alternativeName>
</protein>
<dbReference type="EC" id="7.1.1.-" evidence="1"/>
<dbReference type="EMBL" id="CP000628">
    <property type="protein sequence ID" value="ACM26181.1"/>
    <property type="molecule type" value="Genomic_DNA"/>
</dbReference>
<dbReference type="RefSeq" id="WP_007689949.1">
    <property type="nucleotide sequence ID" value="NC_011985.1"/>
</dbReference>
<dbReference type="SMR" id="B9JD44"/>
<dbReference type="STRING" id="311403.Arad_1844"/>
<dbReference type="KEGG" id="ara:Arad_1844"/>
<dbReference type="eggNOG" id="COG0852">
    <property type="taxonomic scope" value="Bacteria"/>
</dbReference>
<dbReference type="HOGENOM" id="CLU_042628_2_1_5"/>
<dbReference type="Proteomes" id="UP000001600">
    <property type="component" value="Chromosome 1"/>
</dbReference>
<dbReference type="GO" id="GO:0005886">
    <property type="term" value="C:plasma membrane"/>
    <property type="evidence" value="ECO:0007669"/>
    <property type="project" value="UniProtKB-SubCell"/>
</dbReference>
<dbReference type="GO" id="GO:0008137">
    <property type="term" value="F:NADH dehydrogenase (ubiquinone) activity"/>
    <property type="evidence" value="ECO:0007669"/>
    <property type="project" value="InterPro"/>
</dbReference>
<dbReference type="GO" id="GO:0050136">
    <property type="term" value="F:NADH:ubiquinone reductase (non-electrogenic) activity"/>
    <property type="evidence" value="ECO:0007669"/>
    <property type="project" value="UniProtKB-UniRule"/>
</dbReference>
<dbReference type="GO" id="GO:0048038">
    <property type="term" value="F:quinone binding"/>
    <property type="evidence" value="ECO:0007669"/>
    <property type="project" value="UniProtKB-KW"/>
</dbReference>
<dbReference type="Gene3D" id="3.30.460.80">
    <property type="entry name" value="NADH:ubiquinone oxidoreductase, 30kDa subunit"/>
    <property type="match status" value="1"/>
</dbReference>
<dbReference type="HAMAP" id="MF_01357">
    <property type="entry name" value="NDH1_NuoC"/>
    <property type="match status" value="1"/>
</dbReference>
<dbReference type="InterPro" id="IPR010218">
    <property type="entry name" value="NADH_DH_suC"/>
</dbReference>
<dbReference type="InterPro" id="IPR037232">
    <property type="entry name" value="NADH_quin_OxRdtase_su_C/D-like"/>
</dbReference>
<dbReference type="InterPro" id="IPR001268">
    <property type="entry name" value="NADH_UbQ_OxRdtase_30kDa_su"/>
</dbReference>
<dbReference type="InterPro" id="IPR020396">
    <property type="entry name" value="NADH_UbQ_OxRdtase_CS"/>
</dbReference>
<dbReference type="NCBIfam" id="TIGR01961">
    <property type="entry name" value="NuoC_fam"/>
    <property type="match status" value="1"/>
</dbReference>
<dbReference type="NCBIfam" id="NF004733">
    <property type="entry name" value="PRK06074.1-5"/>
    <property type="match status" value="1"/>
</dbReference>
<dbReference type="PANTHER" id="PTHR10884:SF14">
    <property type="entry name" value="NADH DEHYDROGENASE [UBIQUINONE] IRON-SULFUR PROTEIN 3, MITOCHONDRIAL"/>
    <property type="match status" value="1"/>
</dbReference>
<dbReference type="PANTHER" id="PTHR10884">
    <property type="entry name" value="NADH DEHYDROGENASE UBIQUINONE IRON-SULFUR PROTEIN 3"/>
    <property type="match status" value="1"/>
</dbReference>
<dbReference type="Pfam" id="PF00329">
    <property type="entry name" value="Complex1_30kDa"/>
    <property type="match status" value="1"/>
</dbReference>
<dbReference type="SUPFAM" id="SSF143243">
    <property type="entry name" value="Nqo5-like"/>
    <property type="match status" value="1"/>
</dbReference>
<dbReference type="PROSITE" id="PS00542">
    <property type="entry name" value="COMPLEX1_30K"/>
    <property type="match status" value="1"/>
</dbReference>
<gene>
    <name evidence="1" type="primary">nuoC</name>
    <name type="ordered locus">Arad_1844</name>
</gene>
<evidence type="ECO:0000255" key="1">
    <source>
        <dbReference type="HAMAP-Rule" id="MF_01357"/>
    </source>
</evidence>
<name>NUOC_RHIR8</name>